<comment type="function">
    <text evidence="1">Catalyzes the attachment of serine to tRNA(Ser). Is also able to aminoacylate tRNA(Sec) with serine, to form the misacylated tRNA L-seryl-tRNA(Sec), which will be further converted into selenocysteinyl-tRNA(Sec).</text>
</comment>
<comment type="catalytic activity">
    <reaction evidence="1">
        <text>tRNA(Ser) + L-serine + ATP = L-seryl-tRNA(Ser) + AMP + diphosphate + H(+)</text>
        <dbReference type="Rhea" id="RHEA:12292"/>
        <dbReference type="Rhea" id="RHEA-COMP:9669"/>
        <dbReference type="Rhea" id="RHEA-COMP:9703"/>
        <dbReference type="ChEBI" id="CHEBI:15378"/>
        <dbReference type="ChEBI" id="CHEBI:30616"/>
        <dbReference type="ChEBI" id="CHEBI:33019"/>
        <dbReference type="ChEBI" id="CHEBI:33384"/>
        <dbReference type="ChEBI" id="CHEBI:78442"/>
        <dbReference type="ChEBI" id="CHEBI:78533"/>
        <dbReference type="ChEBI" id="CHEBI:456215"/>
        <dbReference type="EC" id="6.1.1.11"/>
    </reaction>
</comment>
<comment type="catalytic activity">
    <reaction evidence="1">
        <text>tRNA(Sec) + L-serine + ATP = L-seryl-tRNA(Sec) + AMP + diphosphate + H(+)</text>
        <dbReference type="Rhea" id="RHEA:42580"/>
        <dbReference type="Rhea" id="RHEA-COMP:9742"/>
        <dbReference type="Rhea" id="RHEA-COMP:10128"/>
        <dbReference type="ChEBI" id="CHEBI:15378"/>
        <dbReference type="ChEBI" id="CHEBI:30616"/>
        <dbReference type="ChEBI" id="CHEBI:33019"/>
        <dbReference type="ChEBI" id="CHEBI:33384"/>
        <dbReference type="ChEBI" id="CHEBI:78442"/>
        <dbReference type="ChEBI" id="CHEBI:78533"/>
        <dbReference type="ChEBI" id="CHEBI:456215"/>
        <dbReference type="EC" id="6.1.1.11"/>
    </reaction>
</comment>
<comment type="pathway">
    <text evidence="1">Aminoacyl-tRNA biosynthesis; selenocysteinyl-tRNA(Sec) biosynthesis; L-seryl-tRNA(Sec) from L-serine and tRNA(Sec): step 1/1.</text>
</comment>
<comment type="subunit">
    <text evidence="1">Homodimer. The tRNA molecule binds across the dimer.</text>
</comment>
<comment type="subcellular location">
    <subcellularLocation>
        <location evidence="1">Cytoplasm</location>
    </subcellularLocation>
</comment>
<comment type="domain">
    <text evidence="1">Consists of two distinct domains, a catalytic core and a N-terminal extension that is involved in tRNA binding.</text>
</comment>
<comment type="similarity">
    <text evidence="1">Belongs to the class-II aminoacyl-tRNA synthetase family. Type-1 seryl-tRNA synthetase subfamily.</text>
</comment>
<evidence type="ECO:0000255" key="1">
    <source>
        <dbReference type="HAMAP-Rule" id="MF_00176"/>
    </source>
</evidence>
<evidence type="ECO:0000256" key="2">
    <source>
        <dbReference type="SAM" id="MobiDB-lite"/>
    </source>
</evidence>
<name>SYS_HALS3</name>
<gene>
    <name evidence="1" type="primary">serS</name>
    <name type="ordered locus">OE_3893F</name>
</gene>
<organism>
    <name type="scientific">Halobacterium salinarum (strain ATCC 29341 / DSM 671 / R1)</name>
    <dbReference type="NCBI Taxonomy" id="478009"/>
    <lineage>
        <taxon>Archaea</taxon>
        <taxon>Methanobacteriati</taxon>
        <taxon>Methanobacteriota</taxon>
        <taxon>Stenosarchaea group</taxon>
        <taxon>Halobacteria</taxon>
        <taxon>Halobacteriales</taxon>
        <taxon>Halobacteriaceae</taxon>
        <taxon>Halobacterium</taxon>
        <taxon>Halobacterium salinarum NRC-34001</taxon>
    </lineage>
</organism>
<sequence length="460" mass="51986">MLSRQFVREHPEKVRDALDAKGVDADLDRILEVDEEWRELKARGDELRHDRNEVSSKIGELKQAGDEDAAQEAIERSQALKDELADVEARADDLEAELERLLLTLPMVPDEDAPVGDSEAENVERRREGFDDRRDLPESVVPHYDLGEELDILDFERGAKVSGGGFYFSKGAGARLEHALVQFMLDVHREQGYEDVFPPMPVSARSMEGTGQFPKFVEDAYRIGGENDADYDDDDLWLLPTAEVPVTNMYRDEILLDDDLPVKHQAYSPNFRREAGEHGTETRGIVRVHQFNKVELVNFVRPEDSAERFHGLLDEAEAVLRRLDLPYRVLEMCTGDMGFTQAKKYDIEVWAPGDDMDGGPEMGGRWLEVSSVSNFKDFQARRADIQYRPERHESAEHLHTLNGSGVAVPRVLVAILEYYQNDDGTVTVPEALQPYMNGQTRIEGSRKVGESALGDGDREA</sequence>
<protein>
    <recommendedName>
        <fullName evidence="1">Serine--tRNA ligase</fullName>
        <ecNumber evidence="1">6.1.1.11</ecNumber>
    </recommendedName>
    <alternativeName>
        <fullName evidence="1">Seryl-tRNA synthetase</fullName>
        <shortName evidence="1">SerRS</shortName>
    </alternativeName>
    <alternativeName>
        <fullName evidence="1">Seryl-tRNA(Ser/Sec) synthetase</fullName>
    </alternativeName>
</protein>
<dbReference type="EC" id="6.1.1.11" evidence="1"/>
<dbReference type="EMBL" id="AM774415">
    <property type="protein sequence ID" value="CAP14517.1"/>
    <property type="molecule type" value="Genomic_DNA"/>
</dbReference>
<dbReference type="RefSeq" id="WP_010903523.1">
    <property type="nucleotide sequence ID" value="NC_010364.1"/>
</dbReference>
<dbReference type="SMR" id="B0R6Z8"/>
<dbReference type="EnsemblBacteria" id="CAP14517">
    <property type="protein sequence ID" value="CAP14517"/>
    <property type="gene ID" value="OE_3893F"/>
</dbReference>
<dbReference type="GeneID" id="68694649"/>
<dbReference type="KEGG" id="hsl:OE_3893F"/>
<dbReference type="HOGENOM" id="CLU_023797_0_1_2"/>
<dbReference type="PhylomeDB" id="B0R6Z8"/>
<dbReference type="UniPathway" id="UPA00906">
    <property type="reaction ID" value="UER00895"/>
</dbReference>
<dbReference type="Proteomes" id="UP000001321">
    <property type="component" value="Chromosome"/>
</dbReference>
<dbReference type="GO" id="GO:0005737">
    <property type="term" value="C:cytoplasm"/>
    <property type="evidence" value="ECO:0007669"/>
    <property type="project" value="UniProtKB-SubCell"/>
</dbReference>
<dbReference type="GO" id="GO:0005524">
    <property type="term" value="F:ATP binding"/>
    <property type="evidence" value="ECO:0007669"/>
    <property type="project" value="UniProtKB-UniRule"/>
</dbReference>
<dbReference type="GO" id="GO:0004828">
    <property type="term" value="F:serine-tRNA ligase activity"/>
    <property type="evidence" value="ECO:0007669"/>
    <property type="project" value="UniProtKB-UniRule"/>
</dbReference>
<dbReference type="GO" id="GO:0016260">
    <property type="term" value="P:selenocysteine biosynthetic process"/>
    <property type="evidence" value="ECO:0007669"/>
    <property type="project" value="UniProtKB-UniRule"/>
</dbReference>
<dbReference type="GO" id="GO:0006434">
    <property type="term" value="P:seryl-tRNA aminoacylation"/>
    <property type="evidence" value="ECO:0007669"/>
    <property type="project" value="UniProtKB-UniRule"/>
</dbReference>
<dbReference type="CDD" id="cd00770">
    <property type="entry name" value="SerRS_core"/>
    <property type="match status" value="1"/>
</dbReference>
<dbReference type="Gene3D" id="3.30.930.10">
    <property type="entry name" value="Bira Bifunctional Protein, Domain 2"/>
    <property type="match status" value="1"/>
</dbReference>
<dbReference type="Gene3D" id="1.10.287.40">
    <property type="entry name" value="Serine-tRNA synthetase, tRNA binding domain"/>
    <property type="match status" value="1"/>
</dbReference>
<dbReference type="HAMAP" id="MF_00176">
    <property type="entry name" value="Ser_tRNA_synth_type1"/>
    <property type="match status" value="1"/>
</dbReference>
<dbReference type="InterPro" id="IPR002314">
    <property type="entry name" value="aa-tRNA-synt_IIb"/>
</dbReference>
<dbReference type="InterPro" id="IPR006195">
    <property type="entry name" value="aa-tRNA-synth_II"/>
</dbReference>
<dbReference type="InterPro" id="IPR045864">
    <property type="entry name" value="aa-tRNA-synth_II/BPL/LPL"/>
</dbReference>
<dbReference type="InterPro" id="IPR002317">
    <property type="entry name" value="Ser-tRNA-ligase_type_1"/>
</dbReference>
<dbReference type="InterPro" id="IPR015866">
    <property type="entry name" value="Ser-tRNA-synth_1_N"/>
</dbReference>
<dbReference type="InterPro" id="IPR042103">
    <property type="entry name" value="SerRS_1_N_sf"/>
</dbReference>
<dbReference type="InterPro" id="IPR033729">
    <property type="entry name" value="SerRS_core"/>
</dbReference>
<dbReference type="InterPro" id="IPR010978">
    <property type="entry name" value="tRNA-bd_arm"/>
</dbReference>
<dbReference type="NCBIfam" id="TIGR00414">
    <property type="entry name" value="serS"/>
    <property type="match status" value="1"/>
</dbReference>
<dbReference type="PANTHER" id="PTHR43697:SF1">
    <property type="entry name" value="SERINE--TRNA LIGASE"/>
    <property type="match status" value="1"/>
</dbReference>
<dbReference type="PANTHER" id="PTHR43697">
    <property type="entry name" value="SERYL-TRNA SYNTHETASE"/>
    <property type="match status" value="1"/>
</dbReference>
<dbReference type="Pfam" id="PF02403">
    <property type="entry name" value="Seryl_tRNA_N"/>
    <property type="match status" value="1"/>
</dbReference>
<dbReference type="Pfam" id="PF00587">
    <property type="entry name" value="tRNA-synt_2b"/>
    <property type="match status" value="1"/>
</dbReference>
<dbReference type="PIRSF" id="PIRSF001529">
    <property type="entry name" value="Ser-tRNA-synth_IIa"/>
    <property type="match status" value="1"/>
</dbReference>
<dbReference type="PRINTS" id="PR00981">
    <property type="entry name" value="TRNASYNTHSER"/>
</dbReference>
<dbReference type="SUPFAM" id="SSF55681">
    <property type="entry name" value="Class II aaRS and biotin synthetases"/>
    <property type="match status" value="1"/>
</dbReference>
<dbReference type="SUPFAM" id="SSF46589">
    <property type="entry name" value="tRNA-binding arm"/>
    <property type="match status" value="1"/>
</dbReference>
<dbReference type="PROSITE" id="PS50862">
    <property type="entry name" value="AA_TRNA_LIGASE_II"/>
    <property type="match status" value="1"/>
</dbReference>
<reference key="1">
    <citation type="journal article" date="2008" name="Genomics">
        <title>Evolution in the laboratory: the genome of Halobacterium salinarum strain R1 compared to that of strain NRC-1.</title>
        <authorList>
            <person name="Pfeiffer F."/>
            <person name="Schuster S.C."/>
            <person name="Broicher A."/>
            <person name="Falb M."/>
            <person name="Palm P."/>
            <person name="Rodewald K."/>
            <person name="Ruepp A."/>
            <person name="Soppa J."/>
            <person name="Tittor J."/>
            <person name="Oesterhelt D."/>
        </authorList>
    </citation>
    <scope>NUCLEOTIDE SEQUENCE [LARGE SCALE GENOMIC DNA]</scope>
    <source>
        <strain>ATCC 29341 / DSM 671 / R1</strain>
    </source>
</reference>
<proteinExistence type="inferred from homology"/>
<feature type="chain" id="PRO_1000098073" description="Serine--tRNA ligase">
    <location>
        <begin position="1"/>
        <end position="460"/>
    </location>
</feature>
<feature type="region of interest" description="Disordered" evidence="2">
    <location>
        <begin position="50"/>
        <end position="71"/>
    </location>
</feature>
<feature type="region of interest" description="Disordered" evidence="2">
    <location>
        <begin position="109"/>
        <end position="129"/>
    </location>
</feature>
<feature type="compositionally biased region" description="Basic and acidic residues" evidence="2">
    <location>
        <begin position="50"/>
        <end position="65"/>
    </location>
</feature>
<feature type="compositionally biased region" description="Acidic residues" evidence="2">
    <location>
        <begin position="109"/>
        <end position="121"/>
    </location>
</feature>
<feature type="binding site" evidence="1">
    <location>
        <begin position="241"/>
        <end position="243"/>
    </location>
    <ligand>
        <name>L-serine</name>
        <dbReference type="ChEBI" id="CHEBI:33384"/>
    </ligand>
</feature>
<feature type="binding site" evidence="1">
    <location>
        <begin position="272"/>
        <end position="274"/>
    </location>
    <ligand>
        <name>ATP</name>
        <dbReference type="ChEBI" id="CHEBI:30616"/>
    </ligand>
</feature>
<feature type="binding site" evidence="1">
    <location>
        <position position="288"/>
    </location>
    <ligand>
        <name>ATP</name>
        <dbReference type="ChEBI" id="CHEBI:30616"/>
    </ligand>
</feature>
<feature type="binding site" evidence="1">
    <location>
        <position position="295"/>
    </location>
    <ligand>
        <name>L-serine</name>
        <dbReference type="ChEBI" id="CHEBI:33384"/>
    </ligand>
</feature>
<feature type="binding site" evidence="1">
    <location>
        <begin position="368"/>
        <end position="371"/>
    </location>
    <ligand>
        <name>ATP</name>
        <dbReference type="ChEBI" id="CHEBI:30616"/>
    </ligand>
</feature>
<feature type="binding site" evidence="1">
    <location>
        <position position="404"/>
    </location>
    <ligand>
        <name>L-serine</name>
        <dbReference type="ChEBI" id="CHEBI:33384"/>
    </ligand>
</feature>
<keyword id="KW-0030">Aminoacyl-tRNA synthetase</keyword>
<keyword id="KW-0067">ATP-binding</keyword>
<keyword id="KW-0963">Cytoplasm</keyword>
<keyword id="KW-0436">Ligase</keyword>
<keyword id="KW-0547">Nucleotide-binding</keyword>
<keyword id="KW-0648">Protein biosynthesis</keyword>
<accession>B0R6Z8</accession>